<proteinExistence type="evidence at protein level"/>
<dbReference type="EMBL" id="AK016821">
    <property type="protein sequence ID" value="BAB30450.1"/>
    <property type="molecule type" value="mRNA"/>
</dbReference>
<dbReference type="EMBL" id="BC099500">
    <property type="protein sequence ID" value="AAH99500.1"/>
    <property type="status" value="ALT_INIT"/>
    <property type="molecule type" value="mRNA"/>
</dbReference>
<dbReference type="CCDS" id="CCDS37857.2">
    <molecule id="Q9D439-1"/>
</dbReference>
<dbReference type="RefSeq" id="NP_083224.2">
    <molecule id="Q9D439-1"/>
    <property type="nucleotide sequence ID" value="NM_028948.2"/>
</dbReference>
<dbReference type="RefSeq" id="XP_011245314.1">
    <molecule id="Q9D439-2"/>
    <property type="nucleotide sequence ID" value="XM_011247012.3"/>
</dbReference>
<dbReference type="PDB" id="8I7R">
    <property type="method" value="EM"/>
    <property type="resolution" value="6.50 A"/>
    <property type="chains" value="G/H=1-514"/>
</dbReference>
<dbReference type="PDB" id="8IYJ">
    <property type="method" value="EM"/>
    <property type="resolution" value="3.50 A"/>
    <property type="chains" value="3/4=1-514"/>
</dbReference>
<dbReference type="PDB" id="8TO0">
    <property type="method" value="EM"/>
    <property type="resolution" value="7.70 A"/>
    <property type="chains" value="3/4=1-514"/>
</dbReference>
<dbReference type="PDBsum" id="8I7R"/>
<dbReference type="PDBsum" id="8IYJ"/>
<dbReference type="PDBsum" id="8TO0"/>
<dbReference type="EMDB" id="EMD-35230"/>
<dbReference type="EMDB" id="EMD-35823"/>
<dbReference type="EMDB" id="EMD-41431"/>
<dbReference type="SMR" id="Q9D439"/>
<dbReference type="FunCoup" id="Q9D439">
    <property type="interactions" value="68"/>
</dbReference>
<dbReference type="STRING" id="10090.ENSMUSP00000110545"/>
<dbReference type="iPTMnet" id="Q9D439"/>
<dbReference type="PhosphoSitePlus" id="Q9D439"/>
<dbReference type="PaxDb" id="10090-ENSMUSP00000110545"/>
<dbReference type="ProteomicsDB" id="280085">
    <molecule id="Q9D439-1"/>
</dbReference>
<dbReference type="ProteomicsDB" id="280086">
    <molecule id="Q9D439-2"/>
</dbReference>
<dbReference type="Ensembl" id="ENSMUST00000114895.4">
    <molecule id="Q9D439-1"/>
    <property type="protein sequence ID" value="ENSMUSP00000110545.4"/>
    <property type="gene ID" value="ENSMUSG00000035394.12"/>
</dbReference>
<dbReference type="GeneID" id="74453"/>
<dbReference type="KEGG" id="mmu:74453"/>
<dbReference type="UCSC" id="uc008fpl.2">
    <molecule id="Q9D439-1"/>
    <property type="organism name" value="mouse"/>
</dbReference>
<dbReference type="AGR" id="MGI:1921703"/>
<dbReference type="CTD" id="220136"/>
<dbReference type="MGI" id="MGI:1921703">
    <property type="gene designation" value="Cfap53"/>
</dbReference>
<dbReference type="VEuPathDB" id="HostDB:ENSMUSG00000035394"/>
<dbReference type="eggNOG" id="ENOG502QRDR">
    <property type="taxonomic scope" value="Eukaryota"/>
</dbReference>
<dbReference type="GeneTree" id="ENSGT00940000168426"/>
<dbReference type="HOGENOM" id="CLU_036489_1_0_1"/>
<dbReference type="InParanoid" id="Q9D439"/>
<dbReference type="OMA" id="EENDRMY"/>
<dbReference type="OrthoDB" id="75950at2759"/>
<dbReference type="PhylomeDB" id="Q9D439"/>
<dbReference type="TreeFam" id="TF329393"/>
<dbReference type="BioGRID-ORCS" id="74453">
    <property type="hits" value="3 hits in 77 CRISPR screens"/>
</dbReference>
<dbReference type="ChiTaRS" id="Cfap53">
    <property type="organism name" value="mouse"/>
</dbReference>
<dbReference type="PRO" id="PR:Q9D439"/>
<dbReference type="Proteomes" id="UP000000589">
    <property type="component" value="Chromosome 18"/>
</dbReference>
<dbReference type="RNAct" id="Q9D439">
    <property type="molecule type" value="protein"/>
</dbReference>
<dbReference type="Bgee" id="ENSMUSG00000035394">
    <property type="expression patterns" value="Expressed in animal zygote and 56 other cell types or tissues"/>
</dbReference>
<dbReference type="ExpressionAtlas" id="Q9D439">
    <property type="expression patterns" value="baseline and differential"/>
</dbReference>
<dbReference type="GO" id="GO:0097728">
    <property type="term" value="C:9+0 motile cilium"/>
    <property type="evidence" value="ECO:0000314"/>
    <property type="project" value="MGI"/>
</dbReference>
<dbReference type="GO" id="GO:0097729">
    <property type="term" value="C:9+2 motile cilium"/>
    <property type="evidence" value="ECO:0000314"/>
    <property type="project" value="MGI"/>
</dbReference>
<dbReference type="GO" id="GO:0160111">
    <property type="term" value="C:axonemal A tubule inner sheath"/>
    <property type="evidence" value="ECO:0000314"/>
    <property type="project" value="UniProtKB"/>
</dbReference>
<dbReference type="GO" id="GO:0005879">
    <property type="term" value="C:axonemal microtubule"/>
    <property type="evidence" value="ECO:0000250"/>
    <property type="project" value="UniProtKB"/>
</dbReference>
<dbReference type="GO" id="GO:0005930">
    <property type="term" value="C:axoneme"/>
    <property type="evidence" value="ECO:0000314"/>
    <property type="project" value="MGI"/>
</dbReference>
<dbReference type="GO" id="GO:0034451">
    <property type="term" value="C:centriolar satellite"/>
    <property type="evidence" value="ECO:0000314"/>
    <property type="project" value="MGI"/>
</dbReference>
<dbReference type="GO" id="GO:0035869">
    <property type="term" value="C:ciliary transition zone"/>
    <property type="evidence" value="ECO:0000250"/>
    <property type="project" value="UniProtKB"/>
</dbReference>
<dbReference type="GO" id="GO:0005576">
    <property type="term" value="C:extracellular region"/>
    <property type="evidence" value="ECO:0007669"/>
    <property type="project" value="GOC"/>
</dbReference>
<dbReference type="GO" id="GO:0097386">
    <property type="term" value="C:glial cell projection"/>
    <property type="evidence" value="ECO:0000314"/>
    <property type="project" value="MGI"/>
</dbReference>
<dbReference type="GO" id="GO:0002177">
    <property type="term" value="C:manchette"/>
    <property type="evidence" value="ECO:0000315"/>
    <property type="project" value="UniProtKB"/>
</dbReference>
<dbReference type="GO" id="GO:0036126">
    <property type="term" value="C:sperm flagellum"/>
    <property type="evidence" value="ECO:0000314"/>
    <property type="project" value="UniProtKB"/>
</dbReference>
<dbReference type="GO" id="GO:0000922">
    <property type="term" value="C:spindle pole"/>
    <property type="evidence" value="ECO:0000250"/>
    <property type="project" value="UniProtKB"/>
</dbReference>
<dbReference type="GO" id="GO:0090660">
    <property type="term" value="P:cerebrospinal fluid circulation"/>
    <property type="evidence" value="ECO:0000315"/>
    <property type="project" value="MGI"/>
</dbReference>
<dbReference type="GO" id="GO:0060271">
    <property type="term" value="P:cilium assembly"/>
    <property type="evidence" value="ECO:0000250"/>
    <property type="project" value="UniProtKB"/>
</dbReference>
<dbReference type="GO" id="GO:0003341">
    <property type="term" value="P:cilium movement"/>
    <property type="evidence" value="ECO:0000250"/>
    <property type="project" value="UniProtKB"/>
</dbReference>
<dbReference type="GO" id="GO:0007368">
    <property type="term" value="P:determination of left/right symmetry"/>
    <property type="evidence" value="ECO:0000250"/>
    <property type="project" value="UniProtKB"/>
</dbReference>
<dbReference type="GO" id="GO:0060287">
    <property type="term" value="P:epithelial cilium movement involved in determination of left/right asymmetry"/>
    <property type="evidence" value="ECO:0000315"/>
    <property type="project" value="MGI"/>
</dbReference>
<dbReference type="GO" id="GO:0051649">
    <property type="term" value="P:establishment of localization in cell"/>
    <property type="evidence" value="ECO:0000315"/>
    <property type="project" value="MGI"/>
</dbReference>
<dbReference type="GO" id="GO:0030317">
    <property type="term" value="P:flagellated sperm motility"/>
    <property type="evidence" value="ECO:0000314"/>
    <property type="project" value="UniProtKB"/>
</dbReference>
<dbReference type="GO" id="GO:1905198">
    <property type="term" value="P:manchette assembly"/>
    <property type="evidence" value="ECO:0000315"/>
    <property type="project" value="UniProtKB"/>
</dbReference>
<dbReference type="GO" id="GO:0120229">
    <property type="term" value="P:protein localization to motile cilium"/>
    <property type="evidence" value="ECO:0000315"/>
    <property type="project" value="MGI"/>
</dbReference>
<dbReference type="GO" id="GO:0120316">
    <property type="term" value="P:sperm flagellum assembly"/>
    <property type="evidence" value="ECO:0000315"/>
    <property type="project" value="UniProtKB"/>
</dbReference>
<dbReference type="InterPro" id="IPR043596">
    <property type="entry name" value="CFAP53/TCHP"/>
</dbReference>
<dbReference type="InterPro" id="IPR043597">
    <property type="entry name" value="TPH_dom"/>
</dbReference>
<dbReference type="PANTHER" id="PTHR31183:SF1">
    <property type="entry name" value="CILIA- AND FLAGELLA-ASSOCIATED PROTEIN 53"/>
    <property type="match status" value="1"/>
</dbReference>
<dbReference type="PANTHER" id="PTHR31183">
    <property type="entry name" value="TRICHOPLEIN KERATIN FILAMENT-BINDING PROTEIN FAMILY MEMBER"/>
    <property type="match status" value="1"/>
</dbReference>
<dbReference type="Pfam" id="PF13868">
    <property type="entry name" value="TPH"/>
    <property type="match status" value="1"/>
</dbReference>
<evidence type="ECO:0000250" key="1">
    <source>
        <dbReference type="UniProtKB" id="F1N7G5"/>
    </source>
</evidence>
<evidence type="ECO:0000250" key="2">
    <source>
        <dbReference type="UniProtKB" id="Q96M91"/>
    </source>
</evidence>
<evidence type="ECO:0000255" key="3"/>
<evidence type="ECO:0000256" key="4">
    <source>
        <dbReference type="SAM" id="MobiDB-lite"/>
    </source>
</evidence>
<evidence type="ECO:0000269" key="5">
    <source>
    </source>
</evidence>
<evidence type="ECO:0000269" key="6">
    <source>
    </source>
</evidence>
<evidence type="ECO:0000269" key="7">
    <source>
    </source>
</evidence>
<evidence type="ECO:0000269" key="8">
    <source>
    </source>
</evidence>
<evidence type="ECO:0000269" key="9">
    <source>
    </source>
</evidence>
<evidence type="ECO:0000269" key="10">
    <source>
    </source>
</evidence>
<evidence type="ECO:0000303" key="11">
    <source>
    </source>
</evidence>
<evidence type="ECO:0000305" key="12"/>
<evidence type="ECO:0000312" key="13">
    <source>
        <dbReference type="MGI" id="MGI:1921703"/>
    </source>
</evidence>
<evidence type="ECO:0007744" key="14">
    <source>
        <dbReference type="PDB" id="8I7R"/>
    </source>
</evidence>
<evidence type="ECO:0007744" key="15">
    <source>
        <dbReference type="PDB" id="8IYJ"/>
    </source>
</evidence>
<evidence type="ECO:0007744" key="16">
    <source>
        <dbReference type="PDB" id="8TO0"/>
    </source>
</evidence>
<reference key="1">
    <citation type="journal article" date="2005" name="Science">
        <title>The transcriptional landscape of the mammalian genome.</title>
        <authorList>
            <person name="Carninci P."/>
            <person name="Kasukawa T."/>
            <person name="Katayama S."/>
            <person name="Gough J."/>
            <person name="Frith M.C."/>
            <person name="Maeda N."/>
            <person name="Oyama R."/>
            <person name="Ravasi T."/>
            <person name="Lenhard B."/>
            <person name="Wells C."/>
            <person name="Kodzius R."/>
            <person name="Shimokawa K."/>
            <person name="Bajic V.B."/>
            <person name="Brenner S.E."/>
            <person name="Batalov S."/>
            <person name="Forrest A.R."/>
            <person name="Zavolan M."/>
            <person name="Davis M.J."/>
            <person name="Wilming L.G."/>
            <person name="Aidinis V."/>
            <person name="Allen J.E."/>
            <person name="Ambesi-Impiombato A."/>
            <person name="Apweiler R."/>
            <person name="Aturaliya R.N."/>
            <person name="Bailey T.L."/>
            <person name="Bansal M."/>
            <person name="Baxter L."/>
            <person name="Beisel K.W."/>
            <person name="Bersano T."/>
            <person name="Bono H."/>
            <person name="Chalk A.M."/>
            <person name="Chiu K.P."/>
            <person name="Choudhary V."/>
            <person name="Christoffels A."/>
            <person name="Clutterbuck D.R."/>
            <person name="Crowe M.L."/>
            <person name="Dalla E."/>
            <person name="Dalrymple B.P."/>
            <person name="de Bono B."/>
            <person name="Della Gatta G."/>
            <person name="di Bernardo D."/>
            <person name="Down T."/>
            <person name="Engstrom P."/>
            <person name="Fagiolini M."/>
            <person name="Faulkner G."/>
            <person name="Fletcher C.F."/>
            <person name="Fukushima T."/>
            <person name="Furuno M."/>
            <person name="Futaki S."/>
            <person name="Gariboldi M."/>
            <person name="Georgii-Hemming P."/>
            <person name="Gingeras T.R."/>
            <person name="Gojobori T."/>
            <person name="Green R.E."/>
            <person name="Gustincich S."/>
            <person name="Harbers M."/>
            <person name="Hayashi Y."/>
            <person name="Hensch T.K."/>
            <person name="Hirokawa N."/>
            <person name="Hill D."/>
            <person name="Huminiecki L."/>
            <person name="Iacono M."/>
            <person name="Ikeo K."/>
            <person name="Iwama A."/>
            <person name="Ishikawa T."/>
            <person name="Jakt M."/>
            <person name="Kanapin A."/>
            <person name="Katoh M."/>
            <person name="Kawasawa Y."/>
            <person name="Kelso J."/>
            <person name="Kitamura H."/>
            <person name="Kitano H."/>
            <person name="Kollias G."/>
            <person name="Krishnan S.P."/>
            <person name="Kruger A."/>
            <person name="Kummerfeld S.K."/>
            <person name="Kurochkin I.V."/>
            <person name="Lareau L.F."/>
            <person name="Lazarevic D."/>
            <person name="Lipovich L."/>
            <person name="Liu J."/>
            <person name="Liuni S."/>
            <person name="McWilliam S."/>
            <person name="Madan Babu M."/>
            <person name="Madera M."/>
            <person name="Marchionni L."/>
            <person name="Matsuda H."/>
            <person name="Matsuzawa S."/>
            <person name="Miki H."/>
            <person name="Mignone F."/>
            <person name="Miyake S."/>
            <person name="Morris K."/>
            <person name="Mottagui-Tabar S."/>
            <person name="Mulder N."/>
            <person name="Nakano N."/>
            <person name="Nakauchi H."/>
            <person name="Ng P."/>
            <person name="Nilsson R."/>
            <person name="Nishiguchi S."/>
            <person name="Nishikawa S."/>
            <person name="Nori F."/>
            <person name="Ohara O."/>
            <person name="Okazaki Y."/>
            <person name="Orlando V."/>
            <person name="Pang K.C."/>
            <person name="Pavan W.J."/>
            <person name="Pavesi G."/>
            <person name="Pesole G."/>
            <person name="Petrovsky N."/>
            <person name="Piazza S."/>
            <person name="Reed J."/>
            <person name="Reid J.F."/>
            <person name="Ring B.Z."/>
            <person name="Ringwald M."/>
            <person name="Rost B."/>
            <person name="Ruan Y."/>
            <person name="Salzberg S.L."/>
            <person name="Sandelin A."/>
            <person name="Schneider C."/>
            <person name="Schoenbach C."/>
            <person name="Sekiguchi K."/>
            <person name="Semple C.A."/>
            <person name="Seno S."/>
            <person name="Sessa L."/>
            <person name="Sheng Y."/>
            <person name="Shibata Y."/>
            <person name="Shimada H."/>
            <person name="Shimada K."/>
            <person name="Silva D."/>
            <person name="Sinclair B."/>
            <person name="Sperling S."/>
            <person name="Stupka E."/>
            <person name="Sugiura K."/>
            <person name="Sultana R."/>
            <person name="Takenaka Y."/>
            <person name="Taki K."/>
            <person name="Tammoja K."/>
            <person name="Tan S.L."/>
            <person name="Tang S."/>
            <person name="Taylor M.S."/>
            <person name="Tegner J."/>
            <person name="Teichmann S.A."/>
            <person name="Ueda H.R."/>
            <person name="van Nimwegen E."/>
            <person name="Verardo R."/>
            <person name="Wei C.L."/>
            <person name="Yagi K."/>
            <person name="Yamanishi H."/>
            <person name="Zabarovsky E."/>
            <person name="Zhu S."/>
            <person name="Zimmer A."/>
            <person name="Hide W."/>
            <person name="Bult C."/>
            <person name="Grimmond S.M."/>
            <person name="Teasdale R.D."/>
            <person name="Liu E.T."/>
            <person name="Brusic V."/>
            <person name="Quackenbush J."/>
            <person name="Wahlestedt C."/>
            <person name="Mattick J.S."/>
            <person name="Hume D.A."/>
            <person name="Kai C."/>
            <person name="Sasaki D."/>
            <person name="Tomaru Y."/>
            <person name="Fukuda S."/>
            <person name="Kanamori-Katayama M."/>
            <person name="Suzuki M."/>
            <person name="Aoki J."/>
            <person name="Arakawa T."/>
            <person name="Iida J."/>
            <person name="Imamura K."/>
            <person name="Itoh M."/>
            <person name="Kato T."/>
            <person name="Kawaji H."/>
            <person name="Kawagashira N."/>
            <person name="Kawashima T."/>
            <person name="Kojima M."/>
            <person name="Kondo S."/>
            <person name="Konno H."/>
            <person name="Nakano K."/>
            <person name="Ninomiya N."/>
            <person name="Nishio T."/>
            <person name="Okada M."/>
            <person name="Plessy C."/>
            <person name="Shibata K."/>
            <person name="Shiraki T."/>
            <person name="Suzuki S."/>
            <person name="Tagami M."/>
            <person name="Waki K."/>
            <person name="Watahiki A."/>
            <person name="Okamura-Oho Y."/>
            <person name="Suzuki H."/>
            <person name="Kawai J."/>
            <person name="Hayashizaki Y."/>
        </authorList>
    </citation>
    <scope>NUCLEOTIDE SEQUENCE [LARGE SCALE MRNA] (ISOFORM 2)</scope>
    <source>
        <strain>C57BL/6J</strain>
        <tissue>Testis</tissue>
    </source>
</reference>
<reference key="2">
    <citation type="journal article" date="2004" name="Genome Res.">
        <title>The status, quality, and expansion of the NIH full-length cDNA project: the Mammalian Gene Collection (MGC).</title>
        <authorList>
            <consortium name="The MGC Project Team"/>
        </authorList>
    </citation>
    <scope>NUCLEOTIDE SEQUENCE [LARGE SCALE MRNA] (ISOFORM 1)</scope>
    <source>
        <tissue>Oocyte</tissue>
    </source>
</reference>
<reference key="3">
    <citation type="journal article" date="2020" name="PLoS Genet.">
        <title>CFAP53 regulates mammalian cilia-type motility patterns through differential localization and recruitment of axonemal dynein components.</title>
        <authorList>
            <person name="Ide T."/>
            <person name="Twan W.K."/>
            <person name="Lu H."/>
            <person name="Ikawa Y."/>
            <person name="Lim L.X."/>
            <person name="Henninger N."/>
            <person name="Nishimura H."/>
            <person name="Takaoka K."/>
            <person name="Narasimhan V."/>
            <person name="Yan X."/>
            <person name="Shiratori H."/>
            <person name="Roy S."/>
            <person name="Hamada H."/>
        </authorList>
    </citation>
    <scope>FUNCTION</scope>
    <scope>INTERACTION WITH ODAD4; DNAIC1; DNAIC2 AND DNAH11</scope>
    <scope>SUBCELLULAR LOCATION</scope>
    <scope>TISSUE SPECIFICITY</scope>
    <scope>DISRUPTION PHENOTYPE</scope>
</reference>
<reference key="4">
    <citation type="journal article" date="2021" name="Front. Cell Dev. Biol.">
        <title>Essential Role of CFAP53 in Sperm Flagellum Biogenesis.</title>
        <authorList>
            <person name="Wu B."/>
            <person name="Yu X."/>
            <person name="Liu C."/>
            <person name="Wang L."/>
            <person name="Huang T."/>
            <person name="Lu G."/>
            <person name="Chen Z.J."/>
            <person name="Li W."/>
            <person name="Liu H."/>
        </authorList>
    </citation>
    <scope>FUNCTION</scope>
    <scope>INTERACTION WITH CCDC42 AND IFT88</scope>
    <scope>SUBCELLULAR LOCATION</scope>
    <scope>TISSUE SPECIFICITY</scope>
    <scope>DEVELOPMENTAL STAGE</scope>
    <scope>DISRUPTION PHENOTYPE</scope>
</reference>
<reference key="5">
    <citation type="journal article" date="2022" name="Development">
        <title>CCDC38 is required for sperm flagellum biogenesis and male fertility in mice.</title>
        <authorList>
            <person name="Zhang R."/>
            <person name="Wu B."/>
            <person name="Liu C."/>
            <person name="Zhang Z."/>
            <person name="Wang X."/>
            <person name="Wang L."/>
            <person name="Xiao S."/>
            <person name="Chen Y."/>
            <person name="Wei H."/>
            <person name="Jiang H."/>
            <person name="Gao F."/>
            <person name="Yuan L."/>
            <person name="Li W."/>
        </authorList>
    </citation>
    <scope>INTERACTION WITH CCDC38</scope>
</reference>
<reference evidence="15" key="6">
    <citation type="journal article" date="2023" name="Cell">
        <title>Structures of sperm flagellar doublet microtubules expand the genetic spectrum of male infertility.</title>
        <authorList>
            <person name="Zhou L."/>
            <person name="Liu H."/>
            <person name="Liu S."/>
            <person name="Yang X."/>
            <person name="Dong Y."/>
            <person name="Pan Y."/>
            <person name="Xiao Z."/>
            <person name="Zheng B."/>
            <person name="Sun Y."/>
            <person name="Huang P."/>
            <person name="Zhang X."/>
            <person name="Hu J."/>
            <person name="Sun R."/>
            <person name="Feng S."/>
            <person name="Zhu Y."/>
            <person name="Liu M."/>
            <person name="Gui M."/>
            <person name="Wu J."/>
        </authorList>
    </citation>
    <scope>STRUCTURE BY ELECTRON MICROSCOPY (3.50 ANGSTROMS) OF SPERM FLAGELLAR DOUBLET MICROTUBULES</scope>
    <scope>FUNCTION</scope>
    <scope>SUBCELLULAR LOCATION</scope>
    <scope>SUBUNIT</scope>
</reference>
<reference evidence="16" key="7">
    <citation type="journal article" date="2023" name="Cell">
        <title>De novo protein identification in mammalian sperm using in situ cryoelectron tomography and AlphaFold2 docking.</title>
        <authorList>
            <person name="Chen Z."/>
            <person name="Shiozaki M."/>
            <person name="Haas K.M."/>
            <person name="Skinner W.M."/>
            <person name="Zhao S."/>
            <person name="Guo C."/>
            <person name="Polacco B.J."/>
            <person name="Yu Z."/>
            <person name="Krogan N.J."/>
            <person name="Lishko P.V."/>
            <person name="Kaake R.M."/>
            <person name="Vale R.D."/>
            <person name="Agard D.A."/>
        </authorList>
    </citation>
    <scope>STRUCTURE BY ELECTRON MICROSCOPY (7.70 ANGSTROMS) OF SPERM FLAGELLAR DOUBLET MICROTUBULES</scope>
    <scope>FUNCTION</scope>
    <scope>SUBCELLULAR LOCATION</scope>
    <scope>SUBUNIT</scope>
</reference>
<reference evidence="14" key="8">
    <citation type="journal article" date="2023" name="Cell Discov.">
        <title>In-cell structural insight into the stability of sperm microtubule doublet.</title>
        <authorList>
            <person name="Tai L."/>
            <person name="Yin G."/>
            <person name="Huang X."/>
            <person name="Sun F."/>
            <person name="Zhu Y."/>
        </authorList>
    </citation>
    <scope>STRUCTURE BY ELECTRON MICROSCOPY (4.50 ANGSTROMS)</scope>
    <scope>FUNCTION</scope>
    <scope>SUBUNIT</scope>
    <scope>SUBCELLULAR LOCATION</scope>
</reference>
<keyword id="KW-0002">3D-structure</keyword>
<keyword id="KW-0025">Alternative splicing</keyword>
<keyword id="KW-0966">Cell projection</keyword>
<keyword id="KW-0969">Cilium</keyword>
<keyword id="KW-0970">Cilium biogenesis/degradation</keyword>
<keyword id="KW-0175">Coiled coil</keyword>
<keyword id="KW-0963">Cytoplasm</keyword>
<keyword id="KW-0206">Cytoskeleton</keyword>
<keyword id="KW-0217">Developmental protein</keyword>
<keyword id="KW-0221">Differentiation</keyword>
<keyword id="KW-0282">Flagellum</keyword>
<keyword id="KW-1185">Reference proteome</keyword>
<keyword id="KW-0744">Spermatogenesis</keyword>
<feature type="chain" id="PRO_0000089408" description="Cilia- and flagella-associated protein 53">
    <location>
        <begin position="1"/>
        <end position="514"/>
    </location>
</feature>
<feature type="region of interest" description="Disordered" evidence="4">
    <location>
        <begin position="261"/>
        <end position="296"/>
    </location>
</feature>
<feature type="region of interest" description="Disordered" evidence="4">
    <location>
        <begin position="495"/>
        <end position="514"/>
    </location>
</feature>
<feature type="coiled-coil region" evidence="3">
    <location>
        <begin position="91"/>
        <end position="176"/>
    </location>
</feature>
<feature type="coiled-coil region" evidence="3">
    <location>
        <begin position="205"/>
        <end position="478"/>
    </location>
</feature>
<feature type="splice variant" id="VSP_057233" description="In isoform 2." evidence="11">
    <location>
        <begin position="1"/>
        <end position="86"/>
    </location>
</feature>
<comment type="function">
    <text evidence="1 2 5 6 8 9 10">Microtubule inner protein (MIP) part of the dynein-decorated doublet microtubules (DMTs) in cilia axoneme, which is required for motile cilia beating (PubMed:37295417, PubMed:37865089, PubMed:37989994). Regulates motility patterns of both 9+0 and 9+2 motile cilia through differential localization and recruitment of axonemal dynein components (PubMed:33347437). Required for centriolar satellite integrity and non-motile cilium assembly (By similarity). Required for motile cilium formation (By similarity). Through its role in the beating of primary cilia, involved in the establishment of organ laterality during embryogenesis (PubMed:33347437). Required for sperm flagellum biogenesis and is essential for male fertility (PubMed:34124066).</text>
</comment>
<comment type="subunit">
    <text evidence="1 2 5 6 7 8 9 10">Microtubule inner protein component of sperm flagellar doublet microtubules (PubMed:37295417, PubMed:37865089, PubMed:37989994). Interacts with PIERCE1 and PIERCE2; the interactions link outer dynein arms docking complex (ODA-DC) to the internal microtubule inner proteins (MIP) in cilium axoneme (By similarity). Interacts with CCDC38 (PubMed:35587122). Interacts with CCDC42 and IFT88 (PubMed:34124066). Interacts with centriolar satellite proteins PIBF1/CEP90 and PCM1 (By similarity). Interacts with dyneins DNAIC1, DNAIC2 AND DNAH11 and with ODA-DC component ODAD4/TTC25 (PubMed:33347437).</text>
</comment>
<comment type="subcellular location">
    <subcellularLocation>
        <location evidence="5">Cytoplasm</location>
        <location evidence="5">Cytoskeleton</location>
        <location evidence="5">Cilium axoneme</location>
    </subcellularLocation>
    <subcellularLocation>
        <location evidence="6 8 9 10">Cytoplasm</location>
        <location evidence="6 8 9 10">Cytoskeleton</location>
        <location evidence="6 8 9 10">Flagellum axoneme</location>
    </subcellularLocation>
    <subcellularLocation>
        <location evidence="5">Cytoplasm</location>
        <location evidence="5">Cytoskeleton</location>
        <location evidence="5">Microtubule organizing center</location>
        <location evidence="5">Centrosome</location>
        <location evidence="5">Centriolar satellite</location>
    </subcellularLocation>
    <subcellularLocation>
        <location evidence="2">Cytoplasm</location>
        <location evidence="2">Cytoskeleton</location>
        <location evidence="2">Spindle pole</location>
    </subcellularLocation>
    <subcellularLocation>
        <location evidence="5 6">Cytoplasm</location>
        <location evidence="5 6">Cytoskeleton</location>
    </subcellularLocation>
    <text evidence="2 5 6">In tracheal cell cilia, localizes prominently to both centriolar satellites and axonemes (PubMed:33347437). Tightly associated with microtubules in tracheal cilia (PubMed:33347437). In embryonic node cells, localizes to the base of the node cilia at the centriolar satellites and, to a lesser extent, to the cilium axoneme (PubMed:33347437). Localizes to centriolar satellites through G1, S phase, G2 and mitosis (By similarity). Enriched on the spindle poles in mitosis (By similarity). Relocalizes from the centriolar satellite to the ciliary transition zone upon ciliogenesis (By similarity). In skin fibroblast cells, locates predominantly to the centriole with much lower levels associated with the actin cytoskeleton (By similarity). Localizes to the sperm flagellum and manchette (PubMed:34124066).</text>
</comment>
<comment type="alternative products">
    <event type="alternative splicing"/>
    <isoform>
        <id>Q9D439-1</id>
        <name>1</name>
        <sequence type="displayed"/>
    </isoform>
    <isoform>
        <id>Q9D439-2</id>
        <name>2</name>
        <sequence type="described" ref="VSP_057233"/>
    </isoform>
</comment>
<comment type="tissue specificity">
    <text evidence="5 6">Expressed predominantly in testis (at protein level) (PubMed:34124066). In embryos at 8 dpc, specifically expressed in the node, in particular within the pit cells that are located at the center of the node and have rotating monocilia on their apical surface (PubMed:33347437). In the adult, expressed in epithelial cells of the trachea, brain ventricles, oviduct and testis (PubMed:33347437).</text>
</comment>
<comment type="developmental stage">
    <text evidence="6">First detected in the testis at postnatal day 7 and levels increase continuously from postnatal day 14 with the highest levels detected in the adult testis.</text>
</comment>
<comment type="disruption phenotype">
    <text evidence="5 6">Smaller size at birth and laterality defects with half exhibiting situs inversus and 15% showing heterotaxy (PubMed:33347437). One study showed that mutants develop hydrocephalus around 3~4 weeks after birth and die by 6 weeks (PubMed:33347437). Another study showed that 72% of mutants that survive after birth die within 6 weeks while 25% live longer than 8 weeks of age (PubMed:34124066). 9+0 cilia of the embryonic node are completely immotile and are shorter than normal while 9+2 cilia within the trachea and brain ventricles differentiate normally and retain motility but have an abnormal beating pattern (PubMed:33347437). Loss of Odad4/Ttc25 and dyneins Dnah5, Dnah9 and Dnah11 in the axoneme of node cilia but not in the cilia of tracheal cells (PubMed:33347437). Loss of outer dynein arms in node cilia but most are retained in tracheal cells (PubMed:33347437). Males are infertile (PubMed:33347437, PubMed:34124066). They exhibit normal mounting behaviors and produce coital plugs but fail to produce any offspring after mating with wild-type adult females (PubMed:34124066). Significantly reduced sperm count with spermatozoa displaying morphological abnormalities including short, coiled or absent flagella, abnormally long manchettes and abnormal sperm heads (PubMed:33347437, PubMed:34124066). Malformed mitochondrial sheath in spermatozoa (PubMed:34124066). Reduced levels of Ccdc42, Ift88 and Ift20 in the testis (PubMed:34124066). Reduced body weight but testis size, testis weight and ratio of testis weight to body weight are unaffected (PubMed:34124066). Fertility of knockout females is normal (PubMed:34124066).</text>
</comment>
<comment type="similarity">
    <text evidence="12">Belongs to the CFAP53 family.</text>
</comment>
<comment type="sequence caution" evidence="12">
    <conflict type="erroneous initiation">
        <sequence resource="EMBL-CDS" id="AAH99500"/>
    </conflict>
    <text>Truncated N-terminus.</text>
</comment>
<organism>
    <name type="scientific">Mus musculus</name>
    <name type="common">Mouse</name>
    <dbReference type="NCBI Taxonomy" id="10090"/>
    <lineage>
        <taxon>Eukaryota</taxon>
        <taxon>Metazoa</taxon>
        <taxon>Chordata</taxon>
        <taxon>Craniata</taxon>
        <taxon>Vertebrata</taxon>
        <taxon>Euteleostomi</taxon>
        <taxon>Mammalia</taxon>
        <taxon>Eutheria</taxon>
        <taxon>Euarchontoglires</taxon>
        <taxon>Glires</taxon>
        <taxon>Rodentia</taxon>
        <taxon>Myomorpha</taxon>
        <taxon>Muroidea</taxon>
        <taxon>Muridae</taxon>
        <taxon>Murinae</taxon>
        <taxon>Mus</taxon>
        <taxon>Mus</taxon>
    </lineage>
</organism>
<gene>
    <name evidence="13" type="primary">Cfap53</name>
    <name evidence="13" type="synonym">Ccdc11</name>
</gene>
<name>CFA53_MOUSE</name>
<sequence length="514" mass="61911">MYSQQFGTVPREFKGPTPKAVIIRAKPPKAQRAEQHLKRIQRSYHKYHTTLASIKSNEENRLKCDWIQRNNHKTFDSLVQARVQDAMQGFVINTEERRNKLRELLASEENEYFSEMQLKGETIEEKKDKMRERTKLLREKKEKERQEFVAEKLDQQFRERCEELRTKLASIHEKKVVEERNAQIEFNKELKRQKLVEEHLFARLWEEDRLAKERREAQEEKRQRELVQNTRLGLDAQVTSIQAQRQGARRMKEEEARILEQNKAQIKREDEQEKLQKQKRRQETRSSLKKAVQDKIESMQREYREDLDLNMKLVGRALQDLQDEADKKKQKREEMGREQKIYNDYLMQRREEEKAQEKELNRLLEDIKAKKLAEKDRELALQRAARKQLMNEVMNTRKLQVQERLQRKLREQEELALHEQRISESLKVLHQEDMEDFARRCALAEEYRNQLQMQIAHQQQAREAEKEEERQEFEAGLAANKACLDKIQRILSENQALSQNVHPMRRGYPDKPPL</sequence>
<accession>Q9D439</accession>
<accession>Q4KL15</accession>
<protein>
    <recommendedName>
        <fullName evidence="13">Cilia- and flagella-associated protein 53</fullName>
    </recommendedName>
    <alternativeName>
        <fullName evidence="13">Coiled-coil domain-containing protein 11</fullName>
    </alternativeName>
</protein>